<comment type="function">
    <text evidence="1">One of the components of the core complex of photosystem II (PSII), required for its stability and/or assembly. PSII is a light-driven water:plastoquinone oxidoreductase that uses light energy to abstract electrons from H(2)O, generating O(2) and a proton gradient subsequently used for ATP formation. It consists of a core antenna complex that captures photons, and an electron transfer chain that converts photonic excitation into a charge separation.</text>
</comment>
<comment type="subunit">
    <text evidence="2">PSII is composed of 1 copy each of membrane proteins PsbA, PsbB, PsbC, PsbD, PsbE, PsbF, PsbH, PsbI, PsbJ, PsbK, PsbL, PsbM, PsbT, PsbY, PsbZ, Psb30/Ycf12, at least 3 peripheral proteins of the oxygen-evolving complex and a large number of cofactors. It forms dimeric complexes.</text>
</comment>
<comment type="subcellular location">
    <subcellularLocation>
        <location evidence="1">Plastid</location>
        <location evidence="1">Chloroplast thylakoid membrane</location>
        <topology evidence="1">Single-pass membrane protein</topology>
    </subcellularLocation>
</comment>
<comment type="similarity">
    <text evidence="1">Belongs to the PsbI family.</text>
</comment>
<dbReference type="EMBL" id="Z11874">
    <property type="protein sequence ID" value="CAA77908.1"/>
    <property type="molecule type" value="Genomic_DNA"/>
</dbReference>
<dbReference type="EMBL" id="X70810">
    <property type="protein sequence ID" value="CAA50091.1"/>
    <property type="molecule type" value="Genomic_DNA"/>
</dbReference>
<dbReference type="PIR" id="S26086">
    <property type="entry name" value="F2EGI"/>
</dbReference>
<dbReference type="RefSeq" id="NP_041904.1">
    <property type="nucleotide sequence ID" value="NC_001603.2"/>
</dbReference>
<dbReference type="SMR" id="P30395"/>
<dbReference type="GeneID" id="807530"/>
<dbReference type="GO" id="GO:0009535">
    <property type="term" value="C:chloroplast thylakoid membrane"/>
    <property type="evidence" value="ECO:0007669"/>
    <property type="project" value="UniProtKB-SubCell"/>
</dbReference>
<dbReference type="GO" id="GO:0009539">
    <property type="term" value="C:photosystem II reaction center"/>
    <property type="evidence" value="ECO:0007669"/>
    <property type="project" value="InterPro"/>
</dbReference>
<dbReference type="GO" id="GO:0015979">
    <property type="term" value="P:photosynthesis"/>
    <property type="evidence" value="ECO:0007669"/>
    <property type="project" value="UniProtKB-UniRule"/>
</dbReference>
<dbReference type="HAMAP" id="MF_01316">
    <property type="entry name" value="PSII_PsbI"/>
    <property type="match status" value="1"/>
</dbReference>
<dbReference type="InterPro" id="IPR003686">
    <property type="entry name" value="PSII_PsbI"/>
</dbReference>
<dbReference type="InterPro" id="IPR037271">
    <property type="entry name" value="PSII_PsbI_sf"/>
</dbReference>
<dbReference type="PANTHER" id="PTHR35772">
    <property type="entry name" value="PHOTOSYSTEM II REACTION CENTER PROTEIN I"/>
    <property type="match status" value="1"/>
</dbReference>
<dbReference type="PANTHER" id="PTHR35772:SF1">
    <property type="entry name" value="PHOTOSYSTEM II REACTION CENTER PROTEIN I"/>
    <property type="match status" value="1"/>
</dbReference>
<dbReference type="Pfam" id="PF02532">
    <property type="entry name" value="PsbI"/>
    <property type="match status" value="1"/>
</dbReference>
<dbReference type="SUPFAM" id="SSF161041">
    <property type="entry name" value="Photosystem II reaction center protein I, PsbI"/>
    <property type="match status" value="1"/>
</dbReference>
<reference key="1">
    <citation type="journal article" date="1993" name="Nucleic Acids Res.">
        <title>Complete sequence of Euglena gracilis chloroplast DNA.</title>
        <authorList>
            <person name="Hallick R.B."/>
            <person name="Hong L."/>
            <person name="Drager R.G."/>
            <person name="Favreau M.R."/>
            <person name="Monfort A."/>
            <person name="Orsat B."/>
            <person name="Spielmann A."/>
            <person name="Stutz E."/>
        </authorList>
    </citation>
    <scope>NUCLEOTIDE SEQUENCE [LARGE SCALE GENOMIC DNA]</scope>
    <source>
        <strain>Z / UTEX 753</strain>
    </source>
</reference>
<name>PSBI_EUGGR</name>
<sequence length="53" mass="6129">MLILKVFVYALILIFVSLFVFGLLSNDPGRNPYDDTGELMREVFYKDPYKGPL</sequence>
<feature type="chain" id="PRO_0000219626" description="Photosystem II reaction center protein I">
    <location>
        <begin position="1"/>
        <end position="53"/>
    </location>
</feature>
<feature type="transmembrane region" description="Helical" evidence="1">
    <location>
        <begin position="1"/>
        <end position="21"/>
    </location>
</feature>
<proteinExistence type="inferred from homology"/>
<protein>
    <recommendedName>
        <fullName evidence="1">Photosystem II reaction center protein I</fullName>
        <shortName evidence="1">PSII-I</shortName>
    </recommendedName>
    <alternativeName>
        <fullName evidence="1">PSII 4.8 kDa protein</fullName>
    </alternativeName>
</protein>
<accession>P30395</accession>
<keyword id="KW-0150">Chloroplast</keyword>
<keyword id="KW-0472">Membrane</keyword>
<keyword id="KW-0602">Photosynthesis</keyword>
<keyword id="KW-0604">Photosystem II</keyword>
<keyword id="KW-0934">Plastid</keyword>
<keyword id="KW-0674">Reaction center</keyword>
<keyword id="KW-0793">Thylakoid</keyword>
<keyword id="KW-0812">Transmembrane</keyword>
<keyword id="KW-1133">Transmembrane helix</keyword>
<geneLocation type="chloroplast"/>
<evidence type="ECO:0000255" key="1">
    <source>
        <dbReference type="HAMAP-Rule" id="MF_01316"/>
    </source>
</evidence>
<evidence type="ECO:0000305" key="2"/>
<organism>
    <name type="scientific">Euglena gracilis</name>
    <dbReference type="NCBI Taxonomy" id="3039"/>
    <lineage>
        <taxon>Eukaryota</taxon>
        <taxon>Discoba</taxon>
        <taxon>Euglenozoa</taxon>
        <taxon>Euglenida</taxon>
        <taxon>Spirocuta</taxon>
        <taxon>Euglenophyceae</taxon>
        <taxon>Euglenales</taxon>
        <taxon>Euglenaceae</taxon>
        <taxon>Euglena</taxon>
    </lineage>
</organism>
<gene>
    <name evidence="1" type="primary">psbI</name>
</gene>